<name>R31B2_STRCO</name>
<gene>
    <name evidence="1" type="primary">rpmE2-2</name>
    <name type="ordered locus">SCO3427</name>
    <name type="ORF">SCE9.34c</name>
</gene>
<dbReference type="EMBL" id="AL939116">
    <property type="protein sequence ID" value="CAB42780.1"/>
    <property type="molecule type" value="Genomic_DNA"/>
</dbReference>
<dbReference type="PIR" id="T36353">
    <property type="entry name" value="T36353"/>
</dbReference>
<dbReference type="RefSeq" id="NP_627633.1">
    <property type="nucleotide sequence ID" value="NC_003888.3"/>
</dbReference>
<dbReference type="RefSeq" id="WP_003975406.1">
    <property type="nucleotide sequence ID" value="NZ_VNID01000023.1"/>
</dbReference>
<dbReference type="SMR" id="Q9X8K6"/>
<dbReference type="STRING" id="100226.gene:17761049"/>
<dbReference type="PaxDb" id="100226-SCO3427"/>
<dbReference type="KEGG" id="sco:SCO3427"/>
<dbReference type="PATRIC" id="fig|100226.15.peg.3489"/>
<dbReference type="eggNOG" id="COG0254">
    <property type="taxonomic scope" value="Bacteria"/>
</dbReference>
<dbReference type="HOGENOM" id="CLU_114306_2_2_11"/>
<dbReference type="InParanoid" id="Q9X8K6"/>
<dbReference type="OrthoDB" id="9803251at2"/>
<dbReference type="PhylomeDB" id="Q9X8K6"/>
<dbReference type="Proteomes" id="UP000001973">
    <property type="component" value="Chromosome"/>
</dbReference>
<dbReference type="GO" id="GO:1990904">
    <property type="term" value="C:ribonucleoprotein complex"/>
    <property type="evidence" value="ECO:0007669"/>
    <property type="project" value="UniProtKB-KW"/>
</dbReference>
<dbReference type="GO" id="GO:0005840">
    <property type="term" value="C:ribosome"/>
    <property type="evidence" value="ECO:0007669"/>
    <property type="project" value="UniProtKB-KW"/>
</dbReference>
<dbReference type="GO" id="GO:0003735">
    <property type="term" value="F:structural constituent of ribosome"/>
    <property type="evidence" value="ECO:0007669"/>
    <property type="project" value="InterPro"/>
</dbReference>
<dbReference type="GO" id="GO:0006412">
    <property type="term" value="P:translation"/>
    <property type="evidence" value="ECO:0007669"/>
    <property type="project" value="UniProtKB-UniRule"/>
</dbReference>
<dbReference type="Gene3D" id="4.10.830.30">
    <property type="entry name" value="Ribosomal protein L31"/>
    <property type="match status" value="1"/>
</dbReference>
<dbReference type="HAMAP" id="MF_00502">
    <property type="entry name" value="Ribosomal_bL31_2"/>
    <property type="match status" value="1"/>
</dbReference>
<dbReference type="InterPro" id="IPR034704">
    <property type="entry name" value="Ribosomal_bL28/bL31-like_sf"/>
</dbReference>
<dbReference type="InterPro" id="IPR002150">
    <property type="entry name" value="Ribosomal_bL31"/>
</dbReference>
<dbReference type="InterPro" id="IPR027493">
    <property type="entry name" value="Ribosomal_bL31_B"/>
</dbReference>
<dbReference type="InterPro" id="IPR042105">
    <property type="entry name" value="Ribosomal_bL31_sf"/>
</dbReference>
<dbReference type="NCBIfam" id="TIGR00105">
    <property type="entry name" value="L31"/>
    <property type="match status" value="1"/>
</dbReference>
<dbReference type="NCBIfam" id="NF002462">
    <property type="entry name" value="PRK01678.1"/>
    <property type="match status" value="1"/>
</dbReference>
<dbReference type="PANTHER" id="PTHR33280">
    <property type="entry name" value="50S RIBOSOMAL PROTEIN L31, CHLOROPLASTIC"/>
    <property type="match status" value="1"/>
</dbReference>
<dbReference type="PANTHER" id="PTHR33280:SF1">
    <property type="entry name" value="LARGE RIBOSOMAL SUBUNIT PROTEIN BL31C"/>
    <property type="match status" value="1"/>
</dbReference>
<dbReference type="Pfam" id="PF01197">
    <property type="entry name" value="Ribosomal_L31"/>
    <property type="match status" value="1"/>
</dbReference>
<dbReference type="PRINTS" id="PR01249">
    <property type="entry name" value="RIBOSOMALL31"/>
</dbReference>
<dbReference type="SUPFAM" id="SSF143800">
    <property type="entry name" value="L28p-like"/>
    <property type="match status" value="1"/>
</dbReference>
<dbReference type="PROSITE" id="PS01143">
    <property type="entry name" value="RIBOSOMAL_L31"/>
    <property type="match status" value="1"/>
</dbReference>
<comment type="subunit">
    <text evidence="1">Part of the 50S ribosomal subunit.</text>
</comment>
<comment type="similarity">
    <text evidence="1">Belongs to the bacterial ribosomal protein bL31 family. Type B subfamily.</text>
</comment>
<keyword id="KW-1185">Reference proteome</keyword>
<keyword id="KW-0687">Ribonucleoprotein</keyword>
<keyword id="KW-0689">Ribosomal protein</keyword>
<organism>
    <name type="scientific">Streptomyces coelicolor (strain ATCC BAA-471 / A3(2) / M145)</name>
    <dbReference type="NCBI Taxonomy" id="100226"/>
    <lineage>
        <taxon>Bacteria</taxon>
        <taxon>Bacillati</taxon>
        <taxon>Actinomycetota</taxon>
        <taxon>Actinomycetes</taxon>
        <taxon>Kitasatosporales</taxon>
        <taxon>Streptomycetaceae</taxon>
        <taxon>Streptomyces</taxon>
        <taxon>Streptomyces albidoflavus group</taxon>
    </lineage>
</organism>
<protein>
    <recommendedName>
        <fullName evidence="1">Large ribosomal subunit protein bL31B-2</fullName>
    </recommendedName>
    <alternativeName>
        <fullName evidence="2">50S ribosomal protein L31 type B 2</fullName>
    </alternativeName>
</protein>
<reference key="1">
    <citation type="journal article" date="2002" name="Nature">
        <title>Complete genome sequence of the model actinomycete Streptomyces coelicolor A3(2).</title>
        <authorList>
            <person name="Bentley S.D."/>
            <person name="Chater K.F."/>
            <person name="Cerdeno-Tarraga A.-M."/>
            <person name="Challis G.L."/>
            <person name="Thomson N.R."/>
            <person name="James K.D."/>
            <person name="Harris D.E."/>
            <person name="Quail M.A."/>
            <person name="Kieser H."/>
            <person name="Harper D."/>
            <person name="Bateman A."/>
            <person name="Brown S."/>
            <person name="Chandra G."/>
            <person name="Chen C.W."/>
            <person name="Collins M."/>
            <person name="Cronin A."/>
            <person name="Fraser A."/>
            <person name="Goble A."/>
            <person name="Hidalgo J."/>
            <person name="Hornsby T."/>
            <person name="Howarth S."/>
            <person name="Huang C.-H."/>
            <person name="Kieser T."/>
            <person name="Larke L."/>
            <person name="Murphy L.D."/>
            <person name="Oliver K."/>
            <person name="O'Neil S."/>
            <person name="Rabbinowitsch E."/>
            <person name="Rajandream M.A."/>
            <person name="Rutherford K.M."/>
            <person name="Rutter S."/>
            <person name="Seeger K."/>
            <person name="Saunders D."/>
            <person name="Sharp S."/>
            <person name="Squares R."/>
            <person name="Squares S."/>
            <person name="Taylor K."/>
            <person name="Warren T."/>
            <person name="Wietzorrek A."/>
            <person name="Woodward J.R."/>
            <person name="Barrell B.G."/>
            <person name="Parkhill J."/>
            <person name="Hopwood D.A."/>
        </authorList>
    </citation>
    <scope>NUCLEOTIDE SEQUENCE [LARGE SCALE GENOMIC DNA]</scope>
    <source>
        <strain>ATCC BAA-471 / A3(2) / M145</strain>
    </source>
</reference>
<feature type="chain" id="PRO_0000173268" description="Large ribosomal subunit protein bL31B-2">
    <location>
        <begin position="1"/>
        <end position="84"/>
    </location>
</feature>
<evidence type="ECO:0000255" key="1">
    <source>
        <dbReference type="HAMAP-Rule" id="MF_00502"/>
    </source>
</evidence>
<evidence type="ECO:0000305" key="2"/>
<proteinExistence type="inferred from homology"/>
<sequence length="84" mass="9781">MRKGIHPEYRPVVFRDRAADYAFLTRSTMTSERTVEWEDGRTYPVVDVEVSHVSHPFYTGTARVLDTAGRVERFERRYGKQDGA</sequence>
<accession>Q9X8K6</accession>